<proteinExistence type="inferred from homology"/>
<reference key="1">
    <citation type="submission" date="2007-03" db="EMBL/GenBank/DDBJ databases">
        <title>Complete sequence of chromosome 1 of Burkholderia vietnamiensis G4.</title>
        <authorList>
            <consortium name="US DOE Joint Genome Institute"/>
            <person name="Copeland A."/>
            <person name="Lucas S."/>
            <person name="Lapidus A."/>
            <person name="Barry K."/>
            <person name="Detter J.C."/>
            <person name="Glavina del Rio T."/>
            <person name="Hammon N."/>
            <person name="Israni S."/>
            <person name="Dalin E."/>
            <person name="Tice H."/>
            <person name="Pitluck S."/>
            <person name="Chain P."/>
            <person name="Malfatti S."/>
            <person name="Shin M."/>
            <person name="Vergez L."/>
            <person name="Schmutz J."/>
            <person name="Larimer F."/>
            <person name="Land M."/>
            <person name="Hauser L."/>
            <person name="Kyrpides N."/>
            <person name="Tiedje J."/>
            <person name="Richardson P."/>
        </authorList>
    </citation>
    <scope>NUCLEOTIDE SEQUENCE [LARGE SCALE GENOMIC DNA]</scope>
    <source>
        <strain>G4 / LMG 22486</strain>
    </source>
</reference>
<organism>
    <name type="scientific">Burkholderia vietnamiensis (strain G4 / LMG 22486)</name>
    <name type="common">Burkholderia cepacia (strain R1808)</name>
    <dbReference type="NCBI Taxonomy" id="269482"/>
    <lineage>
        <taxon>Bacteria</taxon>
        <taxon>Pseudomonadati</taxon>
        <taxon>Pseudomonadota</taxon>
        <taxon>Betaproteobacteria</taxon>
        <taxon>Burkholderiales</taxon>
        <taxon>Burkholderiaceae</taxon>
        <taxon>Burkholderia</taxon>
        <taxon>Burkholderia cepacia complex</taxon>
    </lineage>
</organism>
<name>LEU1_BURVG</name>
<accession>A4JGE0</accession>
<keyword id="KW-0028">Amino-acid biosynthesis</keyword>
<keyword id="KW-0100">Branched-chain amino acid biosynthesis</keyword>
<keyword id="KW-0963">Cytoplasm</keyword>
<keyword id="KW-0432">Leucine biosynthesis</keyword>
<keyword id="KW-0464">Manganese</keyword>
<keyword id="KW-0479">Metal-binding</keyword>
<keyword id="KW-0808">Transferase</keyword>
<protein>
    <recommendedName>
        <fullName evidence="1">2-isopropylmalate synthase</fullName>
        <ecNumber evidence="1">2.3.3.13</ecNumber>
    </recommendedName>
    <alternativeName>
        <fullName evidence="1">Alpha-IPM synthase</fullName>
    </alternativeName>
    <alternativeName>
        <fullName evidence="1">Alpha-isopropylmalate synthase</fullName>
    </alternativeName>
</protein>
<gene>
    <name evidence="1" type="primary">leuA</name>
    <name type="ordered locus">Bcep1808_2344</name>
</gene>
<comment type="function">
    <text evidence="1">Catalyzes the condensation of the acetyl group of acetyl-CoA with 3-methyl-2-oxobutanoate (2-ketoisovalerate) to form 3-carboxy-3-hydroxy-4-methylpentanoate (2-isopropylmalate).</text>
</comment>
<comment type="catalytic activity">
    <reaction evidence="1">
        <text>3-methyl-2-oxobutanoate + acetyl-CoA + H2O = (2S)-2-isopropylmalate + CoA + H(+)</text>
        <dbReference type="Rhea" id="RHEA:21524"/>
        <dbReference type="ChEBI" id="CHEBI:1178"/>
        <dbReference type="ChEBI" id="CHEBI:11851"/>
        <dbReference type="ChEBI" id="CHEBI:15377"/>
        <dbReference type="ChEBI" id="CHEBI:15378"/>
        <dbReference type="ChEBI" id="CHEBI:57287"/>
        <dbReference type="ChEBI" id="CHEBI:57288"/>
        <dbReference type="EC" id="2.3.3.13"/>
    </reaction>
</comment>
<comment type="cofactor">
    <cofactor evidence="1">
        <name>Mn(2+)</name>
        <dbReference type="ChEBI" id="CHEBI:29035"/>
    </cofactor>
</comment>
<comment type="pathway">
    <text evidence="1">Amino-acid biosynthesis; L-leucine biosynthesis; L-leucine from 3-methyl-2-oxobutanoate: step 1/4.</text>
</comment>
<comment type="subunit">
    <text evidence="1">Homodimer.</text>
</comment>
<comment type="subcellular location">
    <subcellularLocation>
        <location evidence="1">Cytoplasm</location>
    </subcellularLocation>
</comment>
<comment type="similarity">
    <text evidence="1">Belongs to the alpha-IPM synthase/homocitrate synthase family. LeuA type 1 subfamily.</text>
</comment>
<sequence>MTDKLIIFDTTLRDGEQSPGASMTKEEKIRIAKHLERMKVDVIEAGFAASSNGDFDAIHTIAGLVKDSTICSLARANDKDIQRAADALKPASSARIHTFIATSPLHMEKKLRMTPDQVFEQARLAVRFARKFTDNVEFSPEDGSRSDLDFLCRVLEAVIAEGATTINIADTVGYGVPELYGNLVKTLRERIPNSDKAIFSVHCHNDLGMAVANSLAGVKIGGARQVECTINGLGERAGNTSLEEIVMAVKTRKDYFGLDVGIDTTQIVPTSKLVSQITGFVVQPNKAVVGANAFAHASGIHQDGVLKARDTYEIMRAEDVGWTANKIVLGKLSGRNAFKQRLQELGVSLDSEAELNAAFMRFKDLADRKAEIFDEDIIAIVSEESALAQEQEHVKFVSLSQHSETGEQPQAKVVFAVEGSEVTGEARGNGPVDATFNAIEGEVGSGSELLLYSVNAITTGTQAQGEVTVRLSKNGRIVNGVGTDPDIVAASAKAYIAALNKLHSKDDKLNPQRA</sequence>
<dbReference type="EC" id="2.3.3.13" evidence="1"/>
<dbReference type="EMBL" id="CP000614">
    <property type="protein sequence ID" value="ABO55343.1"/>
    <property type="molecule type" value="Genomic_DNA"/>
</dbReference>
<dbReference type="SMR" id="A4JGE0"/>
<dbReference type="KEGG" id="bvi:Bcep1808_2344"/>
<dbReference type="eggNOG" id="COG0119">
    <property type="taxonomic scope" value="Bacteria"/>
</dbReference>
<dbReference type="HOGENOM" id="CLU_022158_0_1_4"/>
<dbReference type="UniPathway" id="UPA00048">
    <property type="reaction ID" value="UER00070"/>
</dbReference>
<dbReference type="Proteomes" id="UP000002287">
    <property type="component" value="Chromosome 1"/>
</dbReference>
<dbReference type="GO" id="GO:0005829">
    <property type="term" value="C:cytosol"/>
    <property type="evidence" value="ECO:0007669"/>
    <property type="project" value="TreeGrafter"/>
</dbReference>
<dbReference type="GO" id="GO:0003852">
    <property type="term" value="F:2-isopropylmalate synthase activity"/>
    <property type="evidence" value="ECO:0007669"/>
    <property type="project" value="UniProtKB-UniRule"/>
</dbReference>
<dbReference type="GO" id="GO:0003985">
    <property type="term" value="F:acetyl-CoA C-acetyltransferase activity"/>
    <property type="evidence" value="ECO:0007669"/>
    <property type="project" value="UniProtKB-UniRule"/>
</dbReference>
<dbReference type="GO" id="GO:0030145">
    <property type="term" value="F:manganese ion binding"/>
    <property type="evidence" value="ECO:0007669"/>
    <property type="project" value="UniProtKB-UniRule"/>
</dbReference>
<dbReference type="GO" id="GO:0009098">
    <property type="term" value="P:L-leucine biosynthetic process"/>
    <property type="evidence" value="ECO:0007669"/>
    <property type="project" value="UniProtKB-UniRule"/>
</dbReference>
<dbReference type="CDD" id="cd07940">
    <property type="entry name" value="DRE_TIM_IPMS"/>
    <property type="match status" value="1"/>
</dbReference>
<dbReference type="FunFam" id="1.10.238.260:FF:000001">
    <property type="entry name" value="2-isopropylmalate synthase"/>
    <property type="match status" value="1"/>
</dbReference>
<dbReference type="FunFam" id="3.20.20.70:FF:000010">
    <property type="entry name" value="2-isopropylmalate synthase"/>
    <property type="match status" value="1"/>
</dbReference>
<dbReference type="FunFam" id="3.30.160.270:FF:000003">
    <property type="entry name" value="2-isopropylmalate synthase"/>
    <property type="match status" value="1"/>
</dbReference>
<dbReference type="Gene3D" id="1.10.238.260">
    <property type="match status" value="1"/>
</dbReference>
<dbReference type="Gene3D" id="3.30.160.270">
    <property type="match status" value="1"/>
</dbReference>
<dbReference type="Gene3D" id="3.20.20.70">
    <property type="entry name" value="Aldolase class I"/>
    <property type="match status" value="1"/>
</dbReference>
<dbReference type="HAMAP" id="MF_01025">
    <property type="entry name" value="LeuA_type1"/>
    <property type="match status" value="1"/>
</dbReference>
<dbReference type="InterPro" id="IPR050073">
    <property type="entry name" value="2-IPM_HCS-like"/>
</dbReference>
<dbReference type="InterPro" id="IPR013709">
    <property type="entry name" value="2-isopropylmalate_synth_dimer"/>
</dbReference>
<dbReference type="InterPro" id="IPR002034">
    <property type="entry name" value="AIPM/Hcit_synth_CS"/>
</dbReference>
<dbReference type="InterPro" id="IPR013785">
    <property type="entry name" value="Aldolase_TIM"/>
</dbReference>
<dbReference type="InterPro" id="IPR054691">
    <property type="entry name" value="LeuA/HCS_post-cat"/>
</dbReference>
<dbReference type="InterPro" id="IPR036230">
    <property type="entry name" value="LeuA_allosteric_dom_sf"/>
</dbReference>
<dbReference type="InterPro" id="IPR005671">
    <property type="entry name" value="LeuA_bact_synth"/>
</dbReference>
<dbReference type="InterPro" id="IPR000891">
    <property type="entry name" value="PYR_CT"/>
</dbReference>
<dbReference type="NCBIfam" id="TIGR00973">
    <property type="entry name" value="leuA_bact"/>
    <property type="match status" value="1"/>
</dbReference>
<dbReference type="NCBIfam" id="NF002086">
    <property type="entry name" value="PRK00915.1-3"/>
    <property type="match status" value="1"/>
</dbReference>
<dbReference type="NCBIfam" id="NF002087">
    <property type="entry name" value="PRK00915.1-4"/>
    <property type="match status" value="1"/>
</dbReference>
<dbReference type="PANTHER" id="PTHR10277:SF9">
    <property type="entry name" value="2-ISOPROPYLMALATE SYNTHASE 1, CHLOROPLASTIC-RELATED"/>
    <property type="match status" value="1"/>
</dbReference>
<dbReference type="PANTHER" id="PTHR10277">
    <property type="entry name" value="HOMOCITRATE SYNTHASE-RELATED"/>
    <property type="match status" value="1"/>
</dbReference>
<dbReference type="Pfam" id="PF22617">
    <property type="entry name" value="HCS_D2"/>
    <property type="match status" value="1"/>
</dbReference>
<dbReference type="Pfam" id="PF00682">
    <property type="entry name" value="HMGL-like"/>
    <property type="match status" value="1"/>
</dbReference>
<dbReference type="Pfam" id="PF08502">
    <property type="entry name" value="LeuA_dimer"/>
    <property type="match status" value="1"/>
</dbReference>
<dbReference type="SMART" id="SM00917">
    <property type="entry name" value="LeuA_dimer"/>
    <property type="match status" value="1"/>
</dbReference>
<dbReference type="SUPFAM" id="SSF110921">
    <property type="entry name" value="2-isopropylmalate synthase LeuA, allosteric (dimerisation) domain"/>
    <property type="match status" value="1"/>
</dbReference>
<dbReference type="SUPFAM" id="SSF51569">
    <property type="entry name" value="Aldolase"/>
    <property type="match status" value="1"/>
</dbReference>
<dbReference type="PROSITE" id="PS00815">
    <property type="entry name" value="AIPM_HOMOCIT_SYNTH_1"/>
    <property type="match status" value="1"/>
</dbReference>
<dbReference type="PROSITE" id="PS00816">
    <property type="entry name" value="AIPM_HOMOCIT_SYNTH_2"/>
    <property type="match status" value="1"/>
</dbReference>
<dbReference type="PROSITE" id="PS50991">
    <property type="entry name" value="PYR_CT"/>
    <property type="match status" value="1"/>
</dbReference>
<feature type="chain" id="PRO_1000149157" description="2-isopropylmalate synthase">
    <location>
        <begin position="1"/>
        <end position="514"/>
    </location>
</feature>
<feature type="domain" description="Pyruvate carboxyltransferase" evidence="1">
    <location>
        <begin position="5"/>
        <end position="268"/>
    </location>
</feature>
<feature type="region of interest" description="Regulatory domain" evidence="1">
    <location>
        <begin position="395"/>
        <end position="514"/>
    </location>
</feature>
<feature type="binding site" evidence="1">
    <location>
        <position position="14"/>
    </location>
    <ligand>
        <name>Mn(2+)</name>
        <dbReference type="ChEBI" id="CHEBI:29035"/>
    </ligand>
</feature>
<feature type="binding site" evidence="1">
    <location>
        <position position="202"/>
    </location>
    <ligand>
        <name>Mn(2+)</name>
        <dbReference type="ChEBI" id="CHEBI:29035"/>
    </ligand>
</feature>
<feature type="binding site" evidence="1">
    <location>
        <position position="204"/>
    </location>
    <ligand>
        <name>Mn(2+)</name>
        <dbReference type="ChEBI" id="CHEBI:29035"/>
    </ligand>
</feature>
<feature type="binding site" evidence="1">
    <location>
        <position position="239"/>
    </location>
    <ligand>
        <name>Mn(2+)</name>
        <dbReference type="ChEBI" id="CHEBI:29035"/>
    </ligand>
</feature>
<evidence type="ECO:0000255" key="1">
    <source>
        <dbReference type="HAMAP-Rule" id="MF_01025"/>
    </source>
</evidence>